<name>RSMF_AERS4</name>
<protein>
    <recommendedName>
        <fullName evidence="1">Ribosomal RNA small subunit methyltransferase F</fullName>
        <ecNumber evidence="1">2.1.1.178</ecNumber>
    </recommendedName>
    <alternativeName>
        <fullName evidence="1">16S rRNA m5C1407 methyltransferase</fullName>
    </alternativeName>
    <alternativeName>
        <fullName evidence="1">rRNA (cytosine-C(5)-)-methyltransferase RsmF</fullName>
    </alternativeName>
</protein>
<evidence type="ECO:0000255" key="1">
    <source>
        <dbReference type="HAMAP-Rule" id="MF_01579"/>
    </source>
</evidence>
<proteinExistence type="inferred from homology"/>
<gene>
    <name evidence="1" type="primary">rsmF</name>
    <name type="ordered locus">ASA_2044</name>
</gene>
<keyword id="KW-0963">Cytoplasm</keyword>
<keyword id="KW-0489">Methyltransferase</keyword>
<keyword id="KW-0694">RNA-binding</keyword>
<keyword id="KW-0698">rRNA processing</keyword>
<keyword id="KW-0949">S-adenosyl-L-methionine</keyword>
<keyword id="KW-0808">Transferase</keyword>
<reference key="1">
    <citation type="journal article" date="2008" name="BMC Genomics">
        <title>The genome of Aeromonas salmonicida subsp. salmonicida A449: insights into the evolution of a fish pathogen.</title>
        <authorList>
            <person name="Reith M.E."/>
            <person name="Singh R.K."/>
            <person name="Curtis B."/>
            <person name="Boyd J.M."/>
            <person name="Bouevitch A."/>
            <person name="Kimball J."/>
            <person name="Munholland J."/>
            <person name="Murphy C."/>
            <person name="Sarty D."/>
            <person name="Williams J."/>
            <person name="Nash J.H."/>
            <person name="Johnson S.C."/>
            <person name="Brown L.L."/>
        </authorList>
    </citation>
    <scope>NUCLEOTIDE SEQUENCE [LARGE SCALE GENOMIC DNA]</scope>
    <source>
        <strain>A449</strain>
    </source>
</reference>
<accession>A4SMI9</accession>
<dbReference type="EC" id="2.1.1.178" evidence="1"/>
<dbReference type="EMBL" id="CP000644">
    <property type="protein sequence ID" value="ABO90111.1"/>
    <property type="molecule type" value="Genomic_DNA"/>
</dbReference>
<dbReference type="RefSeq" id="WP_005311517.1">
    <property type="nucleotide sequence ID" value="NC_009348.1"/>
</dbReference>
<dbReference type="SMR" id="A4SMI9"/>
<dbReference type="STRING" id="29491.GCA_000820065_00654"/>
<dbReference type="KEGG" id="asa:ASA_2044"/>
<dbReference type="PATRIC" id="fig|382245.13.peg.2009"/>
<dbReference type="eggNOG" id="COG0144">
    <property type="taxonomic scope" value="Bacteria"/>
</dbReference>
<dbReference type="eggNOG" id="COG3270">
    <property type="taxonomic scope" value="Bacteria"/>
</dbReference>
<dbReference type="HOGENOM" id="CLU_005316_6_2_6"/>
<dbReference type="Proteomes" id="UP000000225">
    <property type="component" value="Chromosome"/>
</dbReference>
<dbReference type="GO" id="GO:0005737">
    <property type="term" value="C:cytoplasm"/>
    <property type="evidence" value="ECO:0007669"/>
    <property type="project" value="UniProtKB-SubCell"/>
</dbReference>
<dbReference type="GO" id="GO:0003723">
    <property type="term" value="F:RNA binding"/>
    <property type="evidence" value="ECO:0007669"/>
    <property type="project" value="UniProtKB-KW"/>
</dbReference>
<dbReference type="GO" id="GO:0009383">
    <property type="term" value="F:rRNA (cytosine-C5-)-methyltransferase activity"/>
    <property type="evidence" value="ECO:0007669"/>
    <property type="project" value="TreeGrafter"/>
</dbReference>
<dbReference type="GO" id="GO:0070475">
    <property type="term" value="P:rRNA base methylation"/>
    <property type="evidence" value="ECO:0007669"/>
    <property type="project" value="TreeGrafter"/>
</dbReference>
<dbReference type="CDD" id="cd02440">
    <property type="entry name" value="AdoMet_MTases"/>
    <property type="match status" value="1"/>
</dbReference>
<dbReference type="Gene3D" id="3.10.450.720">
    <property type="match status" value="1"/>
</dbReference>
<dbReference type="Gene3D" id="3.40.50.150">
    <property type="entry name" value="Vaccinia Virus protein VP39"/>
    <property type="match status" value="1"/>
</dbReference>
<dbReference type="HAMAP" id="MF_01579">
    <property type="entry name" value="16SrRNA_methyltr_F"/>
    <property type="match status" value="1"/>
</dbReference>
<dbReference type="InterPro" id="IPR031341">
    <property type="entry name" value="Methyltr_RsmF_N"/>
</dbReference>
<dbReference type="InterPro" id="IPR049560">
    <property type="entry name" value="MeTrfase_RsmB-F_NOP2_cat"/>
</dbReference>
<dbReference type="InterPro" id="IPR001678">
    <property type="entry name" value="MeTrfase_RsmB-F_NOP2_dom"/>
</dbReference>
<dbReference type="InterPro" id="IPR027391">
    <property type="entry name" value="Nol1_Nop2_Fmu_2"/>
</dbReference>
<dbReference type="InterPro" id="IPR011023">
    <property type="entry name" value="Nop2p"/>
</dbReference>
<dbReference type="InterPro" id="IPR023267">
    <property type="entry name" value="RCMT"/>
</dbReference>
<dbReference type="InterPro" id="IPR023545">
    <property type="entry name" value="rRNA_ssu_MeTfrase_F"/>
</dbReference>
<dbReference type="InterPro" id="IPR018314">
    <property type="entry name" value="RsmB/NOL1/NOP2-like_CS"/>
</dbReference>
<dbReference type="InterPro" id="IPR029063">
    <property type="entry name" value="SAM-dependent_MTases_sf"/>
</dbReference>
<dbReference type="InterPro" id="IPR048457">
    <property type="entry name" value="YebU_pre-PUA_dom"/>
</dbReference>
<dbReference type="NCBIfam" id="TIGR00446">
    <property type="entry name" value="nop2p"/>
    <property type="match status" value="1"/>
</dbReference>
<dbReference type="NCBIfam" id="NF008898">
    <property type="entry name" value="PRK11933.1"/>
    <property type="match status" value="1"/>
</dbReference>
<dbReference type="PANTHER" id="PTHR22807:SF30">
    <property type="entry name" value="28S RRNA (CYTOSINE(4447)-C(5))-METHYLTRANSFERASE-RELATED"/>
    <property type="match status" value="1"/>
</dbReference>
<dbReference type="PANTHER" id="PTHR22807">
    <property type="entry name" value="NOP2 YEAST -RELATED NOL1/NOP2/FMU SUN DOMAIN-CONTAINING"/>
    <property type="match status" value="1"/>
</dbReference>
<dbReference type="Pfam" id="PF01189">
    <property type="entry name" value="Methyltr_RsmB-F"/>
    <property type="match status" value="1"/>
</dbReference>
<dbReference type="Pfam" id="PF17125">
    <property type="entry name" value="Methyltr_RsmF_N"/>
    <property type="match status" value="1"/>
</dbReference>
<dbReference type="Pfam" id="PF13636">
    <property type="entry name" value="Methyltranf_PUA"/>
    <property type="match status" value="1"/>
</dbReference>
<dbReference type="Pfam" id="PF21150">
    <property type="entry name" value="YebU_pre-PUA_dom"/>
    <property type="match status" value="1"/>
</dbReference>
<dbReference type="PRINTS" id="PR02008">
    <property type="entry name" value="RCMTFAMILY"/>
</dbReference>
<dbReference type="SUPFAM" id="SSF53335">
    <property type="entry name" value="S-adenosyl-L-methionine-dependent methyltransferases"/>
    <property type="match status" value="1"/>
</dbReference>
<dbReference type="PROSITE" id="PS01153">
    <property type="entry name" value="NOL1_NOP2_SUN"/>
    <property type="match status" value="1"/>
</dbReference>
<dbReference type="PROSITE" id="PS51686">
    <property type="entry name" value="SAM_MT_RSMB_NOP"/>
    <property type="match status" value="1"/>
</dbReference>
<sequence>MHDNTYLPDHFLHHIAAIMPAHLSMDEFVASCRRPLRRSIRVNTLKISVSDFVMQMQPLGWQFDAVPWCETGFWLTRADESVPLGNTAEHLSGLFYIQEASSMLPVTALFASDQVKRDGMLLDAAAAPGSKTTQIAALMNNQGMLVANEYSSSRLKVLSANIQRCGVTNVGMTHFDAKVFGQWLPETFDAILLDAPCSGEGTVRKDEDALRNWSIESIDEIAAVQQGLLESAFHALKPGGVLVYSTCTLSQQENQAVCQSLLEKFGDALTLDSLADLFPNAEQACTPEGYLHVWPQIFDSEGFFVARLRKHHSVPNTMFKPGKLGKFPFSPLPAKEAEPMLREIEANFGVVPPGQLFGRNDEIWLFPHLFGQVQGKLRFDRIGIKLAETFKKGYRLTHEWALAYGDKATQGVVELDSANAREFMMGRDVWPEQEAGTGEMIVRYQGHTLGMGKWVGSRVKNALPRELVRDNNLFGA</sequence>
<feature type="chain" id="PRO_1000069270" description="Ribosomal RNA small subunit methyltransferase F">
    <location>
        <begin position="1"/>
        <end position="476"/>
    </location>
</feature>
<feature type="active site" description="Nucleophile" evidence="1">
    <location>
        <position position="247"/>
    </location>
</feature>
<feature type="binding site" evidence="1">
    <location>
        <begin position="125"/>
        <end position="131"/>
    </location>
    <ligand>
        <name>S-adenosyl-L-methionine</name>
        <dbReference type="ChEBI" id="CHEBI:59789"/>
    </ligand>
</feature>
<feature type="binding site" evidence="1">
    <location>
        <position position="149"/>
    </location>
    <ligand>
        <name>S-adenosyl-L-methionine</name>
        <dbReference type="ChEBI" id="CHEBI:59789"/>
    </ligand>
</feature>
<feature type="binding site" evidence="1">
    <location>
        <position position="176"/>
    </location>
    <ligand>
        <name>S-adenosyl-L-methionine</name>
        <dbReference type="ChEBI" id="CHEBI:59789"/>
    </ligand>
</feature>
<feature type="binding site" evidence="1">
    <location>
        <position position="194"/>
    </location>
    <ligand>
        <name>S-adenosyl-L-methionine</name>
        <dbReference type="ChEBI" id="CHEBI:59789"/>
    </ligand>
</feature>
<organism>
    <name type="scientific">Aeromonas salmonicida (strain A449)</name>
    <dbReference type="NCBI Taxonomy" id="382245"/>
    <lineage>
        <taxon>Bacteria</taxon>
        <taxon>Pseudomonadati</taxon>
        <taxon>Pseudomonadota</taxon>
        <taxon>Gammaproteobacteria</taxon>
        <taxon>Aeromonadales</taxon>
        <taxon>Aeromonadaceae</taxon>
        <taxon>Aeromonas</taxon>
    </lineage>
</organism>
<comment type="function">
    <text evidence="1">Specifically methylates the cytosine at position 1407 (m5C1407) of 16S rRNA.</text>
</comment>
<comment type="catalytic activity">
    <reaction evidence="1">
        <text>cytidine(1407) in 16S rRNA + S-adenosyl-L-methionine = 5-methylcytidine(1407) in 16S rRNA + S-adenosyl-L-homocysteine + H(+)</text>
        <dbReference type="Rhea" id="RHEA:42756"/>
        <dbReference type="Rhea" id="RHEA-COMP:10223"/>
        <dbReference type="Rhea" id="RHEA-COMP:10224"/>
        <dbReference type="ChEBI" id="CHEBI:15378"/>
        <dbReference type="ChEBI" id="CHEBI:57856"/>
        <dbReference type="ChEBI" id="CHEBI:59789"/>
        <dbReference type="ChEBI" id="CHEBI:74483"/>
        <dbReference type="ChEBI" id="CHEBI:82748"/>
        <dbReference type="EC" id="2.1.1.178"/>
    </reaction>
</comment>
<comment type="subcellular location">
    <subcellularLocation>
        <location evidence="1">Cytoplasm</location>
    </subcellularLocation>
</comment>
<comment type="similarity">
    <text evidence="1">Belongs to the class I-like SAM-binding methyltransferase superfamily. RsmB/NOP family.</text>
</comment>